<proteinExistence type="inferred from homology"/>
<organism>
    <name type="scientific">Coxiella burnetii (strain RSA 493 / Nine Mile phase I)</name>
    <dbReference type="NCBI Taxonomy" id="227377"/>
    <lineage>
        <taxon>Bacteria</taxon>
        <taxon>Pseudomonadati</taxon>
        <taxon>Pseudomonadota</taxon>
        <taxon>Gammaproteobacteria</taxon>
        <taxon>Legionellales</taxon>
        <taxon>Coxiellaceae</taxon>
        <taxon>Coxiella</taxon>
    </lineage>
</organism>
<keyword id="KW-1185">Reference proteome</keyword>
<keyword id="KW-0687">Ribonucleoprotein</keyword>
<keyword id="KW-0689">Ribosomal protein</keyword>
<keyword id="KW-0694">RNA-binding</keyword>
<keyword id="KW-0699">rRNA-binding</keyword>
<reference key="1">
    <citation type="journal article" date="2003" name="Proc. Natl. Acad. Sci. U.S.A.">
        <title>Complete genome sequence of the Q-fever pathogen, Coxiella burnetii.</title>
        <authorList>
            <person name="Seshadri R."/>
            <person name="Paulsen I.T."/>
            <person name="Eisen J.A."/>
            <person name="Read T.D."/>
            <person name="Nelson K.E."/>
            <person name="Nelson W.C."/>
            <person name="Ward N.L."/>
            <person name="Tettelin H."/>
            <person name="Davidsen T.M."/>
            <person name="Beanan M.J."/>
            <person name="DeBoy R.T."/>
            <person name="Daugherty S.C."/>
            <person name="Brinkac L.M."/>
            <person name="Madupu R."/>
            <person name="Dodson R.J."/>
            <person name="Khouri H.M."/>
            <person name="Lee K.H."/>
            <person name="Carty H.A."/>
            <person name="Scanlan D."/>
            <person name="Heinzen R.A."/>
            <person name="Thompson H.A."/>
            <person name="Samuel J.E."/>
            <person name="Fraser C.M."/>
            <person name="Heidelberg J.F."/>
        </authorList>
    </citation>
    <scope>NUCLEOTIDE SEQUENCE [LARGE SCALE GENOMIC DNA]</scope>
    <source>
        <strain>RSA 493 / Nine Mile phase I</strain>
    </source>
</reference>
<comment type="function">
    <text evidence="1">One of the primary rRNA binding proteins, it binds specifically to the 5'-end of 16S ribosomal RNA.</text>
</comment>
<comment type="subunit">
    <text evidence="1">Part of the 30S ribosomal subunit.</text>
</comment>
<comment type="similarity">
    <text evidence="1">Belongs to the universal ribosomal protein uS17 family.</text>
</comment>
<comment type="sequence caution" evidence="2">
    <conflict type="erroneous initiation">
        <sequence resource="EMBL-CDS" id="AAO89805"/>
    </conflict>
</comment>
<dbReference type="EMBL" id="AE016828">
    <property type="protein sequence ID" value="AAO89805.2"/>
    <property type="status" value="ALT_INIT"/>
    <property type="molecule type" value="Genomic_DNA"/>
</dbReference>
<dbReference type="RefSeq" id="NP_819291.2">
    <property type="nucleotide sequence ID" value="NC_002971.3"/>
</dbReference>
<dbReference type="RefSeq" id="WP_010957460.1">
    <property type="nucleotide sequence ID" value="NC_002971.4"/>
</dbReference>
<dbReference type="SMR" id="Q83ER7"/>
<dbReference type="STRING" id="227377.CBU_0247"/>
<dbReference type="DNASU" id="1208128"/>
<dbReference type="EnsemblBacteria" id="AAO89805">
    <property type="protein sequence ID" value="AAO89805"/>
    <property type="gene ID" value="CBU_0247"/>
</dbReference>
<dbReference type="GeneID" id="1208128"/>
<dbReference type="KEGG" id="cbu:CBU_0247"/>
<dbReference type="PATRIC" id="fig|227377.7.peg.242"/>
<dbReference type="eggNOG" id="COG0186">
    <property type="taxonomic scope" value="Bacteria"/>
</dbReference>
<dbReference type="HOGENOM" id="CLU_073626_1_1_6"/>
<dbReference type="OrthoDB" id="9811714at2"/>
<dbReference type="Proteomes" id="UP000002671">
    <property type="component" value="Chromosome"/>
</dbReference>
<dbReference type="GO" id="GO:0022627">
    <property type="term" value="C:cytosolic small ribosomal subunit"/>
    <property type="evidence" value="ECO:0000318"/>
    <property type="project" value="GO_Central"/>
</dbReference>
<dbReference type="GO" id="GO:0019843">
    <property type="term" value="F:rRNA binding"/>
    <property type="evidence" value="ECO:0007669"/>
    <property type="project" value="UniProtKB-UniRule"/>
</dbReference>
<dbReference type="GO" id="GO:0003735">
    <property type="term" value="F:structural constituent of ribosome"/>
    <property type="evidence" value="ECO:0000318"/>
    <property type="project" value="GO_Central"/>
</dbReference>
<dbReference type="GO" id="GO:0006412">
    <property type="term" value="P:translation"/>
    <property type="evidence" value="ECO:0007669"/>
    <property type="project" value="UniProtKB-UniRule"/>
</dbReference>
<dbReference type="CDD" id="cd00364">
    <property type="entry name" value="Ribosomal_uS17"/>
    <property type="match status" value="1"/>
</dbReference>
<dbReference type="FunFam" id="2.40.50.140:FF:000014">
    <property type="entry name" value="30S ribosomal protein S17"/>
    <property type="match status" value="1"/>
</dbReference>
<dbReference type="Gene3D" id="2.40.50.140">
    <property type="entry name" value="Nucleic acid-binding proteins"/>
    <property type="match status" value="1"/>
</dbReference>
<dbReference type="HAMAP" id="MF_01345_B">
    <property type="entry name" value="Ribosomal_uS17_B"/>
    <property type="match status" value="1"/>
</dbReference>
<dbReference type="InterPro" id="IPR012340">
    <property type="entry name" value="NA-bd_OB-fold"/>
</dbReference>
<dbReference type="InterPro" id="IPR000266">
    <property type="entry name" value="Ribosomal_uS17"/>
</dbReference>
<dbReference type="InterPro" id="IPR019984">
    <property type="entry name" value="Ribosomal_uS17_bact/chlr"/>
</dbReference>
<dbReference type="InterPro" id="IPR019979">
    <property type="entry name" value="Ribosomal_uS17_CS"/>
</dbReference>
<dbReference type="NCBIfam" id="NF004123">
    <property type="entry name" value="PRK05610.1"/>
    <property type="match status" value="1"/>
</dbReference>
<dbReference type="NCBIfam" id="TIGR03635">
    <property type="entry name" value="uS17_bact"/>
    <property type="match status" value="1"/>
</dbReference>
<dbReference type="PANTHER" id="PTHR10744">
    <property type="entry name" value="40S RIBOSOMAL PROTEIN S11 FAMILY MEMBER"/>
    <property type="match status" value="1"/>
</dbReference>
<dbReference type="PANTHER" id="PTHR10744:SF1">
    <property type="entry name" value="SMALL RIBOSOMAL SUBUNIT PROTEIN US17M"/>
    <property type="match status" value="1"/>
</dbReference>
<dbReference type="Pfam" id="PF00366">
    <property type="entry name" value="Ribosomal_S17"/>
    <property type="match status" value="1"/>
</dbReference>
<dbReference type="PRINTS" id="PR00973">
    <property type="entry name" value="RIBOSOMALS17"/>
</dbReference>
<dbReference type="SUPFAM" id="SSF50249">
    <property type="entry name" value="Nucleic acid-binding proteins"/>
    <property type="match status" value="1"/>
</dbReference>
<dbReference type="PROSITE" id="PS00056">
    <property type="entry name" value="RIBOSOMAL_S17"/>
    <property type="match status" value="1"/>
</dbReference>
<feature type="chain" id="PRO_0000233467" description="Small ribosomal subunit protein uS17">
    <location>
        <begin position="1"/>
        <end position="89"/>
    </location>
</feature>
<evidence type="ECO:0000255" key="1">
    <source>
        <dbReference type="HAMAP-Rule" id="MF_01345"/>
    </source>
</evidence>
<evidence type="ECO:0000305" key="2"/>
<sequence>MNKNEKMVRSLMGTVVSNKMNDTVVVRVERRVKHPKYGKFIKRSTKIHAHDKGNEGQIGDIVTIRECRPISKTKSWTLVKINERAEKVE</sequence>
<name>RS17_COXBU</name>
<gene>
    <name evidence="1" type="primary">rpsQ</name>
    <name type="ordered locus">CBU_0247</name>
</gene>
<accession>Q83ER7</accession>
<protein>
    <recommendedName>
        <fullName evidence="1">Small ribosomal subunit protein uS17</fullName>
    </recommendedName>
    <alternativeName>
        <fullName evidence="2">30S ribosomal protein S17</fullName>
    </alternativeName>
</protein>